<gene>
    <name type="primary">Birc5</name>
    <name type="synonym">Api4</name>
    <name type="synonym">Iap4</name>
</gene>
<protein>
    <recommendedName>
        <fullName>Baculoviral IAP repeat-containing protein 5</fullName>
    </recommendedName>
    <alternativeName>
        <fullName>Apoptosis inhibitor 4</fullName>
    </alternativeName>
    <alternativeName>
        <fullName>Apoptosis inhibitor survivin</fullName>
    </alternativeName>
    <alternativeName>
        <fullName>TIAP</fullName>
    </alternativeName>
</protein>
<name>BIRC5_MOUSE</name>
<accession>O70201</accession>
<accession>Q923F7</accession>
<accession>Q9WU53</accession>
<accession>Q9WU54</accession>
<dbReference type="EMBL" id="AF077349">
    <property type="protein sequence ID" value="AAD34225.1"/>
    <property type="molecule type" value="mRNA"/>
</dbReference>
<dbReference type="EMBL" id="AB013819">
    <property type="protein sequence ID" value="BAA28266.1"/>
    <property type="molecule type" value="mRNA"/>
</dbReference>
<dbReference type="EMBL" id="AF115517">
    <property type="protein sequence ID" value="AAD26199.1"/>
    <property type="molecule type" value="Genomic_DNA"/>
</dbReference>
<dbReference type="EMBL" id="AF115517">
    <property type="protein sequence ID" value="AAD26200.1"/>
    <property type="molecule type" value="Genomic_DNA"/>
</dbReference>
<dbReference type="EMBL" id="AF115517">
    <property type="protein sequence ID" value="AAD26201.1"/>
    <property type="molecule type" value="Genomic_DNA"/>
</dbReference>
<dbReference type="EMBL" id="BC004702">
    <property type="protein sequence ID" value="AAH04702.1"/>
    <property type="molecule type" value="mRNA"/>
</dbReference>
<dbReference type="CCDS" id="CCDS25694.1">
    <molecule id="O70201-1"/>
</dbReference>
<dbReference type="CCDS" id="CCDS25695.1">
    <molecule id="O70201-2"/>
</dbReference>
<dbReference type="RefSeq" id="NP_001012273.1">
    <molecule id="O70201-2"/>
    <property type="nucleotide sequence ID" value="NM_001012273.1"/>
</dbReference>
<dbReference type="RefSeq" id="NP_033819.1">
    <molecule id="O70201-1"/>
    <property type="nucleotide sequence ID" value="NM_009689.2"/>
</dbReference>
<dbReference type="PDB" id="1M4M">
    <property type="method" value="X-ray"/>
    <property type="resolution" value="2.80 A"/>
    <property type="chains" value="A=1-140"/>
</dbReference>
<dbReference type="PDBsum" id="1M4M"/>
<dbReference type="SMR" id="O70201"/>
<dbReference type="BioGRID" id="198150">
    <property type="interactions" value="2"/>
</dbReference>
<dbReference type="ComplexPortal" id="CPX-113">
    <property type="entry name" value="Survivin homodimer complex"/>
</dbReference>
<dbReference type="ComplexPortal" id="CPX-119">
    <property type="entry name" value="Chromosomal passenger complex"/>
</dbReference>
<dbReference type="FunCoup" id="O70201">
    <property type="interactions" value="1126"/>
</dbReference>
<dbReference type="STRING" id="10090.ENSMUSP00000079124"/>
<dbReference type="MEROPS" id="I32.005"/>
<dbReference type="iPTMnet" id="O70201"/>
<dbReference type="PhosphoSitePlus" id="O70201"/>
<dbReference type="PaxDb" id="10090-ENSMUSP00000079124"/>
<dbReference type="PeptideAtlas" id="O70201"/>
<dbReference type="ProteomicsDB" id="273492">
    <molecule id="O70201-1"/>
</dbReference>
<dbReference type="ProteomicsDB" id="273493">
    <molecule id="O70201-2"/>
</dbReference>
<dbReference type="ProteomicsDB" id="273494">
    <molecule id="O70201-3"/>
</dbReference>
<dbReference type="Pumba" id="O70201"/>
<dbReference type="Antibodypedia" id="1073">
    <property type="antibodies" value="1826 antibodies from 52 providers"/>
</dbReference>
<dbReference type="DNASU" id="11799"/>
<dbReference type="Ensembl" id="ENSMUST00000081387.11">
    <molecule id="O70201-1"/>
    <property type="protein sequence ID" value="ENSMUSP00000079124.5"/>
    <property type="gene ID" value="ENSMUSG00000017716.16"/>
</dbReference>
<dbReference type="Ensembl" id="ENSMUST00000093906.5">
    <molecule id="O70201-2"/>
    <property type="protein sequence ID" value="ENSMUSP00000091433.5"/>
    <property type="gene ID" value="ENSMUSG00000017716.16"/>
</dbReference>
<dbReference type="GeneID" id="11799"/>
<dbReference type="KEGG" id="mmu:11799"/>
<dbReference type="UCSC" id="uc007mod.1">
    <molecule id="O70201-1"/>
    <property type="organism name" value="mouse"/>
</dbReference>
<dbReference type="UCSC" id="uc007moe.1">
    <molecule id="O70201-2"/>
    <property type="organism name" value="mouse"/>
</dbReference>
<dbReference type="AGR" id="MGI:1203517"/>
<dbReference type="CTD" id="332"/>
<dbReference type="MGI" id="MGI:1203517">
    <property type="gene designation" value="Birc5"/>
</dbReference>
<dbReference type="VEuPathDB" id="HostDB:ENSMUSG00000017716"/>
<dbReference type="eggNOG" id="KOG1101">
    <property type="taxonomic scope" value="Eukaryota"/>
</dbReference>
<dbReference type="GeneTree" id="ENSGT00510000047537"/>
<dbReference type="HOGENOM" id="CLU_016347_0_1_1"/>
<dbReference type="InParanoid" id="O70201"/>
<dbReference type="OMA" id="IKMYFYE"/>
<dbReference type="OrthoDB" id="2196114at2759"/>
<dbReference type="PhylomeDB" id="O70201"/>
<dbReference type="TreeFam" id="TF342652"/>
<dbReference type="BioGRID-ORCS" id="11799">
    <property type="hits" value="23 hits in 75 CRISPR screens"/>
</dbReference>
<dbReference type="ChiTaRS" id="Birc5">
    <property type="organism name" value="mouse"/>
</dbReference>
<dbReference type="EvolutionaryTrace" id="O70201"/>
<dbReference type="PRO" id="PR:O70201"/>
<dbReference type="Proteomes" id="UP000000589">
    <property type="component" value="Chromosome 11"/>
</dbReference>
<dbReference type="RNAct" id="O70201">
    <property type="molecule type" value="protein"/>
</dbReference>
<dbReference type="Bgee" id="ENSMUSG00000017716">
    <property type="expression patterns" value="Expressed in fetal liver hematopoietic progenitor cell and 224 other cell types or tissues"/>
</dbReference>
<dbReference type="ExpressionAtlas" id="O70201">
    <property type="expression patterns" value="baseline and differential"/>
</dbReference>
<dbReference type="GO" id="GO:0005814">
    <property type="term" value="C:centriole"/>
    <property type="evidence" value="ECO:0000250"/>
    <property type="project" value="UniProtKB"/>
</dbReference>
<dbReference type="GO" id="GO:0032133">
    <property type="term" value="C:chromosome passenger complex"/>
    <property type="evidence" value="ECO:0000250"/>
    <property type="project" value="UniProtKB"/>
</dbReference>
<dbReference type="GO" id="GO:0000775">
    <property type="term" value="C:chromosome, centromeric region"/>
    <property type="evidence" value="ECO:0000314"/>
    <property type="project" value="MGI"/>
</dbReference>
<dbReference type="GO" id="GO:0005737">
    <property type="term" value="C:cytoplasm"/>
    <property type="evidence" value="ECO:0000314"/>
    <property type="project" value="MGI"/>
</dbReference>
<dbReference type="GO" id="GO:0005881">
    <property type="term" value="C:cytoplasmic microtubule"/>
    <property type="evidence" value="ECO:0000250"/>
    <property type="project" value="UniProtKB"/>
</dbReference>
<dbReference type="GO" id="GO:0005829">
    <property type="term" value="C:cytosol"/>
    <property type="evidence" value="ECO:0000250"/>
    <property type="project" value="UniProtKB"/>
</dbReference>
<dbReference type="GO" id="GO:0031021">
    <property type="term" value="C:interphase microtubule organizing center"/>
    <property type="evidence" value="ECO:0000250"/>
    <property type="project" value="UniProtKB"/>
</dbReference>
<dbReference type="GO" id="GO:0000776">
    <property type="term" value="C:kinetochore"/>
    <property type="evidence" value="ECO:0000250"/>
    <property type="project" value="UniProtKB"/>
</dbReference>
<dbReference type="GO" id="GO:0015630">
    <property type="term" value="C:microtubule cytoskeleton"/>
    <property type="evidence" value="ECO:0000266"/>
    <property type="project" value="ComplexPortal"/>
</dbReference>
<dbReference type="GO" id="GO:0030496">
    <property type="term" value="C:midbody"/>
    <property type="evidence" value="ECO:0000250"/>
    <property type="project" value="UniProtKB"/>
</dbReference>
<dbReference type="GO" id="GO:0005634">
    <property type="term" value="C:nucleus"/>
    <property type="evidence" value="ECO:0000250"/>
    <property type="project" value="UniProtKB"/>
</dbReference>
<dbReference type="GO" id="GO:0005876">
    <property type="term" value="C:spindle microtubule"/>
    <property type="evidence" value="ECO:0000250"/>
    <property type="project" value="UniProtKB"/>
</dbReference>
<dbReference type="GO" id="GO:1990713">
    <property type="term" value="C:survivin complex"/>
    <property type="evidence" value="ECO:0000266"/>
    <property type="project" value="ComplexPortal"/>
</dbReference>
<dbReference type="GO" id="GO:0004869">
    <property type="term" value="F:cysteine-type endopeptidase inhibitor activity"/>
    <property type="evidence" value="ECO:0007669"/>
    <property type="project" value="UniProtKB-KW"/>
</dbReference>
<dbReference type="GO" id="GO:0043027">
    <property type="term" value="F:cysteine-type endopeptidase inhibitor activity involved in apoptotic process"/>
    <property type="evidence" value="ECO:0000250"/>
    <property type="project" value="UniProtKB"/>
</dbReference>
<dbReference type="GO" id="GO:0008017">
    <property type="term" value="F:microtubule binding"/>
    <property type="evidence" value="ECO:0000250"/>
    <property type="project" value="UniProtKB"/>
</dbReference>
<dbReference type="GO" id="GO:0042803">
    <property type="term" value="F:protein homodimerization activity"/>
    <property type="evidence" value="ECO:0000250"/>
    <property type="project" value="UniProtKB"/>
</dbReference>
<dbReference type="GO" id="GO:0015631">
    <property type="term" value="F:tubulin binding"/>
    <property type="evidence" value="ECO:0000250"/>
    <property type="project" value="UniProtKB"/>
</dbReference>
<dbReference type="GO" id="GO:0008270">
    <property type="term" value="F:zinc ion binding"/>
    <property type="evidence" value="ECO:0000250"/>
    <property type="project" value="UniProtKB"/>
</dbReference>
<dbReference type="GO" id="GO:0006915">
    <property type="term" value="P:apoptotic process"/>
    <property type="evidence" value="ECO:0007669"/>
    <property type="project" value="UniProtKB-KW"/>
</dbReference>
<dbReference type="GO" id="GO:0051301">
    <property type="term" value="P:cell division"/>
    <property type="evidence" value="ECO:0000250"/>
    <property type="project" value="UniProtKB"/>
</dbReference>
<dbReference type="GO" id="GO:0051303">
    <property type="term" value="P:establishment of chromosome localization"/>
    <property type="evidence" value="ECO:0000250"/>
    <property type="project" value="UniProtKB"/>
</dbReference>
<dbReference type="GO" id="GO:0000086">
    <property type="term" value="P:G2/M transition of mitotic cell cycle"/>
    <property type="evidence" value="ECO:0000250"/>
    <property type="project" value="UniProtKB"/>
</dbReference>
<dbReference type="GO" id="GO:0007127">
    <property type="term" value="P:meiosis I"/>
    <property type="evidence" value="ECO:0000314"/>
    <property type="project" value="MGI"/>
</dbReference>
<dbReference type="GO" id="GO:0000226">
    <property type="term" value="P:microtubule cytoskeleton organization"/>
    <property type="evidence" value="ECO:0000315"/>
    <property type="project" value="MGI"/>
</dbReference>
<dbReference type="GO" id="GO:0000278">
    <property type="term" value="P:mitotic cell cycle"/>
    <property type="evidence" value="ECO:0000303"/>
    <property type="project" value="ComplexPortal"/>
</dbReference>
<dbReference type="GO" id="GO:0000281">
    <property type="term" value="P:mitotic cytokinesis"/>
    <property type="evidence" value="ECO:0000250"/>
    <property type="project" value="UniProtKB"/>
</dbReference>
<dbReference type="GO" id="GO:0007094">
    <property type="term" value="P:mitotic spindle assembly checkpoint signaling"/>
    <property type="evidence" value="ECO:0000250"/>
    <property type="project" value="UniProtKB"/>
</dbReference>
<dbReference type="GO" id="GO:0051256">
    <property type="term" value="P:mitotic spindle midzone assembly"/>
    <property type="evidence" value="ECO:0000303"/>
    <property type="project" value="ComplexPortal"/>
</dbReference>
<dbReference type="GO" id="GO:0007052">
    <property type="term" value="P:mitotic spindle organization"/>
    <property type="evidence" value="ECO:0000303"/>
    <property type="project" value="ComplexPortal"/>
</dbReference>
<dbReference type="GO" id="GO:0043066">
    <property type="term" value="P:negative regulation of apoptotic process"/>
    <property type="evidence" value="ECO:0000315"/>
    <property type="project" value="UniProtKB"/>
</dbReference>
<dbReference type="GO" id="GO:0045892">
    <property type="term" value="P:negative regulation of DNA-templated transcription"/>
    <property type="evidence" value="ECO:0000250"/>
    <property type="project" value="UniProtKB"/>
</dbReference>
<dbReference type="GO" id="GO:0043524">
    <property type="term" value="P:negative regulation of neuron apoptotic process"/>
    <property type="evidence" value="ECO:0000315"/>
    <property type="project" value="MGI"/>
</dbReference>
<dbReference type="GO" id="GO:1902425">
    <property type="term" value="P:positive regulation of attachment of mitotic spindle microtubules to kinetochore"/>
    <property type="evidence" value="ECO:0000303"/>
    <property type="project" value="ComplexPortal"/>
</dbReference>
<dbReference type="GO" id="GO:0031536">
    <property type="term" value="P:positive regulation of exit from mitosis"/>
    <property type="evidence" value="ECO:0000250"/>
    <property type="project" value="UniProtKB"/>
</dbReference>
<dbReference type="GO" id="GO:0045931">
    <property type="term" value="P:positive regulation of mitotic cell cycle"/>
    <property type="evidence" value="ECO:0000250"/>
    <property type="project" value="UniProtKB"/>
</dbReference>
<dbReference type="GO" id="GO:0090267">
    <property type="term" value="P:positive regulation of mitotic cell cycle spindle assembly checkpoint"/>
    <property type="evidence" value="ECO:0000303"/>
    <property type="project" value="ComplexPortal"/>
</dbReference>
<dbReference type="GO" id="GO:1903490">
    <property type="term" value="P:positive regulation of mitotic cytokinesis"/>
    <property type="evidence" value="ECO:0000303"/>
    <property type="project" value="ComplexPortal"/>
</dbReference>
<dbReference type="GO" id="GO:1901970">
    <property type="term" value="P:positive regulation of mitotic sister chromatid separation"/>
    <property type="evidence" value="ECO:0000303"/>
    <property type="project" value="ComplexPortal"/>
</dbReference>
<dbReference type="GO" id="GO:0031503">
    <property type="term" value="P:protein-containing complex localization"/>
    <property type="evidence" value="ECO:0000250"/>
    <property type="project" value="UniProtKB"/>
</dbReference>
<dbReference type="GO" id="GO:0061178">
    <property type="term" value="P:regulation of insulin secretion involved in cellular response to glucose stimulus"/>
    <property type="evidence" value="ECO:0000315"/>
    <property type="project" value="MGI"/>
</dbReference>
<dbReference type="GO" id="GO:0007346">
    <property type="term" value="P:regulation of mitotic cell cycle"/>
    <property type="evidence" value="ECO:0000315"/>
    <property type="project" value="MGI"/>
</dbReference>
<dbReference type="GO" id="GO:0061469">
    <property type="term" value="P:regulation of type B pancreatic cell proliferation"/>
    <property type="evidence" value="ECO:0000315"/>
    <property type="project" value="MGI"/>
</dbReference>
<dbReference type="CDD" id="cd00022">
    <property type="entry name" value="BIR"/>
    <property type="match status" value="1"/>
</dbReference>
<dbReference type="DisProt" id="DP02534"/>
<dbReference type="FunFam" id="1.10.1170.10:FF:000009">
    <property type="entry name" value="Baculoviral IAP repeat-containing protein 5"/>
    <property type="match status" value="1"/>
</dbReference>
<dbReference type="Gene3D" id="1.10.1170.10">
    <property type="entry name" value="Inhibitor Of Apoptosis Protein (2mihbC-IAP-1), Chain A"/>
    <property type="match status" value="1"/>
</dbReference>
<dbReference type="InterPro" id="IPR051190">
    <property type="entry name" value="Baculoviral_IAP"/>
</dbReference>
<dbReference type="InterPro" id="IPR001370">
    <property type="entry name" value="BIR_rpt"/>
</dbReference>
<dbReference type="PANTHER" id="PTHR46771:SF3">
    <property type="entry name" value="BACULOVIRAL IAP REPEAT-CONTAINING PROTEIN 5"/>
    <property type="match status" value="1"/>
</dbReference>
<dbReference type="PANTHER" id="PTHR46771">
    <property type="entry name" value="DETERIN"/>
    <property type="match status" value="1"/>
</dbReference>
<dbReference type="Pfam" id="PF00653">
    <property type="entry name" value="BIR"/>
    <property type="match status" value="1"/>
</dbReference>
<dbReference type="SMART" id="SM00238">
    <property type="entry name" value="BIR"/>
    <property type="match status" value="1"/>
</dbReference>
<dbReference type="SUPFAM" id="SSF57924">
    <property type="entry name" value="Inhibitor of apoptosis (IAP) repeat"/>
    <property type="match status" value="1"/>
</dbReference>
<dbReference type="PROSITE" id="PS50143">
    <property type="entry name" value="BIR_REPEAT_2"/>
    <property type="match status" value="1"/>
</dbReference>
<organism>
    <name type="scientific">Mus musculus</name>
    <name type="common">Mouse</name>
    <dbReference type="NCBI Taxonomy" id="10090"/>
    <lineage>
        <taxon>Eukaryota</taxon>
        <taxon>Metazoa</taxon>
        <taxon>Chordata</taxon>
        <taxon>Craniata</taxon>
        <taxon>Vertebrata</taxon>
        <taxon>Euteleostomi</taxon>
        <taxon>Mammalia</taxon>
        <taxon>Eutheria</taxon>
        <taxon>Euarchontoglires</taxon>
        <taxon>Glires</taxon>
        <taxon>Rodentia</taxon>
        <taxon>Myomorpha</taxon>
        <taxon>Muroidea</taxon>
        <taxon>Muridae</taxon>
        <taxon>Murinae</taxon>
        <taxon>Mus</taxon>
        <taxon>Mus</taxon>
    </lineage>
</organism>
<reference key="1">
    <citation type="submission" date="1997-09" db="EMBL/GenBank/DDBJ databases">
        <title>Mammalian inhibitor of apoptosis (IAP) homolog.</title>
        <authorList>
            <person name="Uren A.G."/>
            <person name="Vaux D.L."/>
        </authorList>
    </citation>
    <scope>NUCLEOTIDE SEQUENCE [MRNA] (ISOFORM 1)</scope>
</reference>
<reference key="2">
    <citation type="submission" date="1998-05" db="EMBL/GenBank/DDBJ databases">
        <authorList>
            <person name="Kobayashi K."/>
            <person name="Otaki M."/>
            <person name="Ogasawara T."/>
            <person name="Tokuhisa T."/>
        </authorList>
    </citation>
    <scope>NUCLEOTIDE SEQUENCE [MRNA] (ISOFORM 1)</scope>
    <source>
        <tissue>Embryo</tissue>
    </source>
</reference>
<reference key="3">
    <citation type="journal article" date="2000" name="Blood">
        <title>Three differentially expressed survivin cDNA variants encode proteins with distinct antiapoptotic functions.</title>
        <authorList>
            <person name="Conway E.M."/>
            <person name="Pollefeyt S."/>
            <person name="Cornelissen J."/>
            <person name="DeBaere I."/>
            <person name="Steiner-Mosonyi M."/>
            <person name="Ong K."/>
            <person name="Baens M."/>
            <person name="Collen D."/>
            <person name="Schuh A.C."/>
        </authorList>
    </citation>
    <scope>NUCLEOTIDE SEQUENCE [GENOMIC DNA] (ISOFORMS 1; 2 AND 3)</scope>
</reference>
<reference key="4">
    <citation type="journal article" date="2004" name="Genome Res.">
        <title>The status, quality, and expansion of the NIH full-length cDNA project: the Mammalian Gene Collection (MGC).</title>
        <authorList>
            <consortium name="The MGC Project Team"/>
        </authorList>
    </citation>
    <scope>NUCLEOTIDE SEQUENCE [LARGE SCALE MRNA] (ISOFORM 2)</scope>
</reference>
<reference key="5">
    <citation type="journal article" date="2015" name="J. Biol. Chem.">
        <title>The Proapoptotic F-box Protein Fbxl7 Regulates Mitochondrial Function by Mediating the Ubiquitylation and Proteasomal Degradation of Survivin.</title>
        <authorList>
            <person name="Liu Y."/>
            <person name="Lear T."/>
            <person name="Iannone O."/>
            <person name="Shiva S."/>
            <person name="Corey C."/>
            <person name="Rajbhandari S."/>
            <person name="Jerome J."/>
            <person name="Chen B.B."/>
            <person name="Mallampalli R.K."/>
        </authorList>
    </citation>
    <scope>FUNCTION</scope>
</reference>
<reference key="6">
    <citation type="journal article" date="2000" name="Mol. Cell">
        <title>Crystal structure and mutagenic analysis of the inhibitor-of-apoptosis protein survivin.</title>
        <authorList>
            <person name="Muchmore S.W."/>
            <person name="Chen J."/>
            <person name="Jakob C."/>
            <person name="Zakula D."/>
            <person name="Matayoshi E.D."/>
            <person name="Wu W."/>
            <person name="Zhang H."/>
            <person name="Li F."/>
            <person name="Ng S.C."/>
            <person name="Altieri D.C."/>
        </authorList>
    </citation>
    <scope>X-RAY CRYSTALLOGRAPHY (2.8 ANGSTROMS) OF 7-118</scope>
    <scope>PHOSPHORYLATION AT THR-34</scope>
</reference>
<proteinExistence type="evidence at protein level"/>
<keyword id="KW-0002">3D-structure</keyword>
<keyword id="KW-0007">Acetylation</keyword>
<keyword id="KW-0025">Alternative splicing</keyword>
<keyword id="KW-0053">Apoptosis</keyword>
<keyword id="KW-0131">Cell cycle</keyword>
<keyword id="KW-0132">Cell division</keyword>
<keyword id="KW-0137">Centromere</keyword>
<keyword id="KW-0158">Chromosome</keyword>
<keyword id="KW-0159">Chromosome partition</keyword>
<keyword id="KW-0963">Cytoplasm</keyword>
<keyword id="KW-0206">Cytoskeleton</keyword>
<keyword id="KW-0995">Kinetochore</keyword>
<keyword id="KW-0479">Metal-binding</keyword>
<keyword id="KW-0493">Microtubule</keyword>
<keyword id="KW-0498">Mitosis</keyword>
<keyword id="KW-0539">Nucleus</keyword>
<keyword id="KW-0597">Phosphoprotein</keyword>
<keyword id="KW-0646">Protease inhibitor</keyword>
<keyword id="KW-1185">Reference proteome</keyword>
<keyword id="KW-0678">Repressor</keyword>
<keyword id="KW-0789">Thiol protease inhibitor</keyword>
<keyword id="KW-0804">Transcription</keyword>
<keyword id="KW-0805">Transcription regulation</keyword>
<keyword id="KW-0832">Ubl conjugation</keyword>
<keyword id="KW-0862">Zinc</keyword>
<evidence type="ECO:0000250" key="1">
    <source>
        <dbReference type="UniProtKB" id="E3SCZ8"/>
    </source>
</evidence>
<evidence type="ECO:0000250" key="2">
    <source>
        <dbReference type="UniProtKB" id="O15392"/>
    </source>
</evidence>
<evidence type="ECO:0000256" key="3">
    <source>
        <dbReference type="SAM" id="MobiDB-lite"/>
    </source>
</evidence>
<evidence type="ECO:0000269" key="4">
    <source>
    </source>
</evidence>
<evidence type="ECO:0000269" key="5">
    <source>
    </source>
</evidence>
<evidence type="ECO:0000303" key="6">
    <source>
    </source>
</evidence>
<evidence type="ECO:0000305" key="7"/>
<evidence type="ECO:0007829" key="8">
    <source>
        <dbReference type="PDB" id="1M4M"/>
    </source>
</evidence>
<feature type="chain" id="PRO_0000122357" description="Baculoviral IAP repeat-containing protein 5">
    <location>
        <begin position="1"/>
        <end position="140"/>
    </location>
</feature>
<feature type="repeat" description="BIR">
    <location>
        <begin position="18"/>
        <end position="88"/>
    </location>
</feature>
<feature type="region of interest" description="Disordered" evidence="3">
    <location>
        <begin position="113"/>
        <end position="140"/>
    </location>
</feature>
<feature type="compositionally biased region" description="Basic and acidic residues" evidence="3">
    <location>
        <begin position="113"/>
        <end position="129"/>
    </location>
</feature>
<feature type="compositionally biased region" description="Polar residues" evidence="3">
    <location>
        <begin position="130"/>
        <end position="140"/>
    </location>
</feature>
<feature type="binding site">
    <location>
        <position position="57"/>
    </location>
    <ligand>
        <name>Zn(2+)</name>
        <dbReference type="ChEBI" id="CHEBI:29105"/>
        <label>1</label>
    </ligand>
</feature>
<feature type="binding site">
    <location>
        <position position="60"/>
    </location>
    <ligand>
        <name>Zn(2+)</name>
        <dbReference type="ChEBI" id="CHEBI:29105"/>
        <label>1</label>
    </ligand>
</feature>
<feature type="binding site">
    <location>
        <position position="76"/>
    </location>
    <ligand>
        <name>Zn(2+)</name>
        <dbReference type="ChEBI" id="CHEBI:29105"/>
        <label>2</label>
    </ligand>
</feature>
<feature type="binding site">
    <location>
        <position position="77"/>
    </location>
    <ligand>
        <name>Zn(2+)</name>
        <dbReference type="ChEBI" id="CHEBI:29105"/>
        <label>1</label>
    </ligand>
</feature>
<feature type="binding site">
    <location>
        <position position="80"/>
    </location>
    <ligand>
        <name>Zn(2+)</name>
        <dbReference type="ChEBI" id="CHEBI:29105"/>
        <label>2</label>
    </ligand>
</feature>
<feature type="binding site">
    <location>
        <position position="84"/>
    </location>
    <ligand>
        <name>Zn(2+)</name>
        <dbReference type="ChEBI" id="CHEBI:29105"/>
        <label>1</label>
    </ligand>
</feature>
<feature type="site" description="Interaction with FBXL7" evidence="2">
    <location>
        <position position="126"/>
    </location>
</feature>
<feature type="modified residue" description="N6-acetyllysine" evidence="2">
    <location>
        <position position="23"/>
    </location>
</feature>
<feature type="modified residue" description="Phosphothreonine; by CDK1 and CDK15" evidence="4">
    <location>
        <position position="34"/>
    </location>
</feature>
<feature type="modified residue" description="Phosphothreonine" evidence="2">
    <location>
        <position position="48"/>
    </location>
</feature>
<feature type="modified residue" description="N6-acetyllysine" evidence="2">
    <location>
        <position position="90"/>
    </location>
</feature>
<feature type="modified residue" description="N6-acetyllysine" evidence="2">
    <location>
        <position position="110"/>
    </location>
</feature>
<feature type="modified residue" description="N6-acetyllysine" evidence="2">
    <location>
        <position position="112"/>
    </location>
</feature>
<feature type="modified residue" description="N6-acetyllysine" evidence="2">
    <location>
        <position position="115"/>
    </location>
</feature>
<feature type="modified residue" description="Phosphothreonine; by AURKB" evidence="2">
    <location>
        <position position="117"/>
    </location>
</feature>
<feature type="modified residue" description="N6-acetyllysine" evidence="2">
    <location>
        <position position="129"/>
    </location>
</feature>
<feature type="splice variant" id="VSP_002455" description="In isoform 3." evidence="7">
    <original>MAE</original>
    <variation>RGA</variation>
    <location>
        <begin position="38"/>
        <end position="40"/>
    </location>
</feature>
<feature type="splice variant" id="VSP_002456" description="In isoform 3." evidence="7">
    <location>
        <begin position="41"/>
        <end position="140"/>
    </location>
</feature>
<feature type="splice variant" id="VSP_002457" description="In isoform 2." evidence="6">
    <original>AKETNNKQKEFEETAKTTRQSIEQLAA</original>
    <variation>VCMIENKD</variation>
    <location>
        <begin position="114"/>
        <end position="140"/>
    </location>
</feature>
<feature type="helix" evidence="8">
    <location>
        <begin position="11"/>
        <end position="13"/>
    </location>
</feature>
<feature type="helix" evidence="8">
    <location>
        <begin position="15"/>
        <end position="20"/>
    </location>
</feature>
<feature type="strand" evidence="8">
    <location>
        <begin position="29"/>
        <end position="31"/>
    </location>
</feature>
<feature type="helix" evidence="8">
    <location>
        <begin position="35"/>
        <end position="40"/>
    </location>
</feature>
<feature type="strand" evidence="8">
    <location>
        <begin position="43"/>
        <end position="45"/>
    </location>
</feature>
<feature type="strand" evidence="8">
    <location>
        <begin position="55"/>
        <end position="57"/>
    </location>
</feature>
<feature type="turn" evidence="8">
    <location>
        <begin position="58"/>
        <end position="60"/>
    </location>
</feature>
<feature type="helix" evidence="8">
    <location>
        <begin position="73"/>
        <end position="79"/>
    </location>
</feature>
<feature type="helix" evidence="8">
    <location>
        <begin position="85"/>
        <end position="88"/>
    </location>
</feature>
<feature type="helix" evidence="8">
    <location>
        <begin position="93"/>
        <end position="95"/>
    </location>
</feature>
<feature type="helix" evidence="8">
    <location>
        <begin position="98"/>
        <end position="116"/>
    </location>
</feature>
<sequence length="140" mass="16298">MGAPALPQIWQLYLKNYRIATFKNWPFLEDCACTPERMAEAGFIHCPTENEPDLAQCFFCFKELEGWEPDDNPIEEHRKHSPGCAFLTVKKQMEELTVSEFLKLDRQRAKNKIAKETNNKQKEFEETAKTTRQSIEQLAA</sequence>
<comment type="function">
    <text evidence="2 5">Multitasking protein that has dual roles in promoting cell proliferation and preventing apoptosis (PubMed:25778398). Component of a chromosome passage protein complex (CPC) which is essential for chromosome alignment and segregation during mitosis and cytokinesis (By similarity). Acts as an important regulator of the localization of this complex; directs CPC movement to different locations from the inner centromere during prometaphase to midbody during cytokinesis and participates in the organization of the center spindle by associating with polymerized microtubules (By similarity). Involved in the recruitment of CPC to centromeres during early mitosis via association with histone H3 phosphorylated at 'Thr-3' (H3pT3) during mitosis (By similarity). The complex with RAN plays a role in mitotic spindle formation by serving as a physical scaffold to help deliver the RAN effector molecule TPX2 to microtubules (By similarity). May counteract a default induction of apoptosis in G2/M phase (By similarity). The acetylated form represses STAT3 transactivation of target gene promoters (By similarity). May play a role in neoplasia. Inhibitor of CASP3 and CASP7 (By similarity). Essential for the maintenance of mitochondrial integrity and function (PubMed:25778398).</text>
</comment>
<comment type="subunit">
    <text evidence="2">Monomer or homodimer. Exists as a homodimer in the apo state and as a monomer in the CPC-bound state. The monomer protects cells against apoptosis more efficiently than the dimer. Only the dimeric form is capable of enhancing tubulin stability in cells. When phosphorylated, interacts with LAMTOR5/HBXIP; the resulting complex binds pro-CASP9, as well as active CASP9, but much less efficiently. Component of the chromosomal passenger complex (CPC) composed of at least BIRC5/survivin, CDCA8/borealin, INCENP, AURKB or AURKC; in the complex forms a triple-helix bundle-based subcomplex with INCENP and CDCA8. Interacts with JTB. Interacts (via BIR domain) with histone H3 phosphorylated at 'Thr-3' (H3pT3). Interacts with EVI5. Interacts with GTP-bound RAN in both the S and M phases of the cell cycle. Interacts with USP9X. Interacts with tubulin. Interacts with BIRC2/c-IAP1. The acetylated form at Lys-129 interacts with STAT3. The monomeric form deacetylated at Lys-129 interacts with XPO1/CRM1. The monomeric form interacts with XIAP/BIRC4. Both the dimeric and monomeric form can interact with DIABLO/SMAC. Interacts with BIRC6/bruce. Interacts with FBXL7; this interaction facilitates the polyubiquitination and subsequent proteasomal degradation of BIRC5 by the SCF(FBXL7) E3 ubiquitin-protein ligase complex (By similarity).</text>
</comment>
<comment type="subcellular location">
    <subcellularLocation>
        <location evidence="2">Cytoplasm</location>
    </subcellularLocation>
    <subcellularLocation>
        <location evidence="2">Nucleus</location>
    </subcellularLocation>
    <subcellularLocation>
        <location evidence="2">Chromosome</location>
    </subcellularLocation>
    <subcellularLocation>
        <location evidence="2">Chromosome</location>
        <location evidence="2">Centromere</location>
    </subcellularLocation>
    <subcellularLocation>
        <location evidence="2">Cytoplasm</location>
        <location evidence="2">Cytoskeleton</location>
        <location evidence="2">Spindle</location>
    </subcellularLocation>
    <subcellularLocation>
        <location evidence="2">Chromosome</location>
        <location evidence="2">Centromere</location>
        <location evidence="2">Kinetochore</location>
    </subcellularLocation>
    <subcellularLocation>
        <location evidence="2">Midbody</location>
    </subcellularLocation>
    <text evidence="1 2">Localizes at the centromeres from prophase to metaphase, at the spindle midzone during anaphase and a the midbody during telophase and cytokinesis. Accumulates in the nucleus upon treatment with leptomycin B (LMB), a XPO1/CRM1 nuclear export inhibitor (By similarity). Localizes on chromosome arms and inner centromeres from prophase through metaphase. Localizes to kinetochores in metaphase, distributes to the midzone microtubules in anaphase and at telophase, localizes exclusively to the midbody. Colocalizes with AURKB at mitotic chromosomes. Acetylation at Lys-129 directs its localization to the nucleus by enhancing homodimerization and thereby inhibiting XPO1/CRM1-mediated nuclear export (By similarity).</text>
</comment>
<comment type="alternative products">
    <event type="alternative splicing"/>
    <isoform>
        <id>O70201-1</id>
        <name>1</name>
        <name>Survivin 140</name>
        <sequence type="displayed"/>
    </isoform>
    <isoform>
        <id>O70201-2</id>
        <name>2</name>
        <name>Survivin 121</name>
        <sequence type="described" ref="VSP_002457"/>
    </isoform>
    <isoform>
        <id>O70201-3</id>
        <name>3</name>
        <name>Survivin 40</name>
        <sequence type="described" ref="VSP_002455 VSP_002456"/>
    </isoform>
</comment>
<comment type="domain">
    <text evidence="2">The BIR repeat is necessary and sufficient for LAMTOR5 binding.</text>
</comment>
<comment type="PTM">
    <text evidence="2">Ubiquitinated by the Cul9-RING ubiquitin-protein ligase complex, leading to its degradation. Ubiquitination is required for centrosomal targeting. Deubiquitinated by USP35 or USP38; leading to stabilization.</text>
</comment>
<comment type="PTM">
    <text evidence="2">Acetylation at Lys-129 results in its homodimerization, while deacetylation promotes the formation of monomers which heterodimerize with XPO1/CRM1 which facilitates its nuclear export. The acetylated form represses STAT3 transactivation. The dynamic equilibrium between its acetylation and deacetylation at Lys-129 determines its interaction with XPO1/CRM1, its subsequent subcellular localization, and its ability to inhibit STAT3 transactivation.</text>
</comment>
<comment type="PTM">
    <text evidence="2">In vitro phosphorylation at Thr-117 by AURKB prevents interaction with INCENP and localization to mitotic chromosomes. Phosphorylation at Thr-48 by CK2 is critical for its mitotic and anti-apoptotic activities. Phosphorylation at Thr-34 by CDK15 is critical for its anti-apoptotic activity.</text>
</comment>
<comment type="similarity">
    <text evidence="7">Belongs to the IAP family.</text>
</comment>